<comment type="function">
    <text evidence="1">Catalyzes the methylthiolation of an aspartic acid residue of ribosomal protein uS12.</text>
</comment>
<comment type="catalytic activity">
    <reaction evidence="1">
        <text>L-aspartate(89)-[ribosomal protein uS12]-hydrogen + (sulfur carrier)-SH + AH2 + 2 S-adenosyl-L-methionine = 3-methylsulfanyl-L-aspartate(89)-[ribosomal protein uS12]-hydrogen + (sulfur carrier)-H + 5'-deoxyadenosine + L-methionine + A + S-adenosyl-L-homocysteine + 2 H(+)</text>
        <dbReference type="Rhea" id="RHEA:37087"/>
        <dbReference type="Rhea" id="RHEA-COMP:10460"/>
        <dbReference type="Rhea" id="RHEA-COMP:10461"/>
        <dbReference type="Rhea" id="RHEA-COMP:14737"/>
        <dbReference type="Rhea" id="RHEA-COMP:14739"/>
        <dbReference type="ChEBI" id="CHEBI:13193"/>
        <dbReference type="ChEBI" id="CHEBI:15378"/>
        <dbReference type="ChEBI" id="CHEBI:17319"/>
        <dbReference type="ChEBI" id="CHEBI:17499"/>
        <dbReference type="ChEBI" id="CHEBI:29917"/>
        <dbReference type="ChEBI" id="CHEBI:29961"/>
        <dbReference type="ChEBI" id="CHEBI:57844"/>
        <dbReference type="ChEBI" id="CHEBI:57856"/>
        <dbReference type="ChEBI" id="CHEBI:59789"/>
        <dbReference type="ChEBI" id="CHEBI:64428"/>
        <dbReference type="ChEBI" id="CHEBI:73599"/>
        <dbReference type="EC" id="2.8.4.4"/>
    </reaction>
</comment>
<comment type="cofactor">
    <cofactor evidence="1">
        <name>[4Fe-4S] cluster</name>
        <dbReference type="ChEBI" id="CHEBI:49883"/>
    </cofactor>
    <text evidence="1">Binds 2 [4Fe-4S] clusters. One cluster is coordinated with 3 cysteines and an exchangeable S-adenosyl-L-methionine.</text>
</comment>
<comment type="subcellular location">
    <subcellularLocation>
        <location evidence="1">Cytoplasm</location>
    </subcellularLocation>
</comment>
<comment type="similarity">
    <text evidence="1">Belongs to the methylthiotransferase family. RimO subfamily.</text>
</comment>
<proteinExistence type="inferred from homology"/>
<accession>B4SBD5</accession>
<name>RIMO_PELPB</name>
<organism>
    <name type="scientific">Pelodictyon phaeoclathratiforme (strain DSM 5477 / BU-1)</name>
    <dbReference type="NCBI Taxonomy" id="324925"/>
    <lineage>
        <taxon>Bacteria</taxon>
        <taxon>Pseudomonadati</taxon>
        <taxon>Chlorobiota</taxon>
        <taxon>Chlorobiia</taxon>
        <taxon>Chlorobiales</taxon>
        <taxon>Chlorobiaceae</taxon>
        <taxon>Chlorobium/Pelodictyon group</taxon>
        <taxon>Pelodictyon</taxon>
    </lineage>
</organism>
<evidence type="ECO:0000255" key="1">
    <source>
        <dbReference type="HAMAP-Rule" id="MF_01865"/>
    </source>
</evidence>
<evidence type="ECO:0000255" key="2">
    <source>
        <dbReference type="PROSITE-ProRule" id="PRU01266"/>
    </source>
</evidence>
<gene>
    <name evidence="1" type="primary">rimO</name>
    <name type="ordered locus">Ppha_1757</name>
</gene>
<protein>
    <recommendedName>
        <fullName evidence="1">Ribosomal protein uS12 methylthiotransferase RimO</fullName>
        <shortName evidence="1">uS12 MTTase</shortName>
        <shortName evidence="1">uS12 methylthiotransferase</shortName>
        <ecNumber evidence="1">2.8.4.4</ecNumber>
    </recommendedName>
    <alternativeName>
        <fullName evidence="1">Ribosomal protein uS12 (aspartate-C(3))-methylthiotransferase</fullName>
    </alternativeName>
    <alternativeName>
        <fullName evidence="1">Ribosome maturation factor RimO</fullName>
    </alternativeName>
</protein>
<dbReference type="EC" id="2.8.4.4" evidence="1"/>
<dbReference type="EMBL" id="CP001110">
    <property type="protein sequence ID" value="ACF43989.1"/>
    <property type="molecule type" value="Genomic_DNA"/>
</dbReference>
<dbReference type="RefSeq" id="WP_012508476.1">
    <property type="nucleotide sequence ID" value="NC_011060.1"/>
</dbReference>
<dbReference type="SMR" id="B4SBD5"/>
<dbReference type="STRING" id="324925.Ppha_1757"/>
<dbReference type="KEGG" id="pph:Ppha_1757"/>
<dbReference type="eggNOG" id="COG0621">
    <property type="taxonomic scope" value="Bacteria"/>
</dbReference>
<dbReference type="HOGENOM" id="CLU_018697_0_1_10"/>
<dbReference type="OrthoDB" id="9805215at2"/>
<dbReference type="Proteomes" id="UP000002724">
    <property type="component" value="Chromosome"/>
</dbReference>
<dbReference type="GO" id="GO:0005829">
    <property type="term" value="C:cytosol"/>
    <property type="evidence" value="ECO:0007669"/>
    <property type="project" value="TreeGrafter"/>
</dbReference>
<dbReference type="GO" id="GO:0051539">
    <property type="term" value="F:4 iron, 4 sulfur cluster binding"/>
    <property type="evidence" value="ECO:0007669"/>
    <property type="project" value="UniProtKB-UniRule"/>
</dbReference>
<dbReference type="GO" id="GO:0035599">
    <property type="term" value="F:aspartic acid methylthiotransferase activity"/>
    <property type="evidence" value="ECO:0007669"/>
    <property type="project" value="TreeGrafter"/>
</dbReference>
<dbReference type="GO" id="GO:0046872">
    <property type="term" value="F:metal ion binding"/>
    <property type="evidence" value="ECO:0007669"/>
    <property type="project" value="UniProtKB-KW"/>
</dbReference>
<dbReference type="GO" id="GO:0103039">
    <property type="term" value="F:protein methylthiotransferase activity"/>
    <property type="evidence" value="ECO:0007669"/>
    <property type="project" value="UniProtKB-EC"/>
</dbReference>
<dbReference type="GO" id="GO:0006400">
    <property type="term" value="P:tRNA modification"/>
    <property type="evidence" value="ECO:0007669"/>
    <property type="project" value="InterPro"/>
</dbReference>
<dbReference type="CDD" id="cd01335">
    <property type="entry name" value="Radical_SAM"/>
    <property type="match status" value="1"/>
</dbReference>
<dbReference type="FunFam" id="3.80.30.20:FF:000001">
    <property type="entry name" value="tRNA-2-methylthio-N(6)-dimethylallyladenosine synthase 2"/>
    <property type="match status" value="1"/>
</dbReference>
<dbReference type="Gene3D" id="3.40.50.12160">
    <property type="entry name" value="Methylthiotransferase, N-terminal domain"/>
    <property type="match status" value="1"/>
</dbReference>
<dbReference type="Gene3D" id="2.40.50.140">
    <property type="entry name" value="Nucleic acid-binding proteins"/>
    <property type="match status" value="1"/>
</dbReference>
<dbReference type="Gene3D" id="3.80.30.20">
    <property type="entry name" value="tm_1862 like domain"/>
    <property type="match status" value="1"/>
</dbReference>
<dbReference type="HAMAP" id="MF_01865">
    <property type="entry name" value="MTTase_RimO"/>
    <property type="match status" value="1"/>
</dbReference>
<dbReference type="InterPro" id="IPR006638">
    <property type="entry name" value="Elp3/MiaA/NifB-like_rSAM"/>
</dbReference>
<dbReference type="InterPro" id="IPR005839">
    <property type="entry name" value="Methylthiotransferase"/>
</dbReference>
<dbReference type="InterPro" id="IPR020612">
    <property type="entry name" value="Methylthiotransferase_CS"/>
</dbReference>
<dbReference type="InterPro" id="IPR013848">
    <property type="entry name" value="Methylthiotransferase_N"/>
</dbReference>
<dbReference type="InterPro" id="IPR038135">
    <property type="entry name" value="Methylthiotransferase_N_sf"/>
</dbReference>
<dbReference type="InterPro" id="IPR012340">
    <property type="entry name" value="NA-bd_OB-fold"/>
</dbReference>
<dbReference type="InterPro" id="IPR005840">
    <property type="entry name" value="Ribosomal_uS12_MeSTrfase_RimO"/>
</dbReference>
<dbReference type="InterPro" id="IPR007197">
    <property type="entry name" value="rSAM"/>
</dbReference>
<dbReference type="InterPro" id="IPR023404">
    <property type="entry name" value="rSAM_horseshoe"/>
</dbReference>
<dbReference type="InterPro" id="IPR002792">
    <property type="entry name" value="TRAM_dom"/>
</dbReference>
<dbReference type="NCBIfam" id="TIGR01125">
    <property type="entry name" value="30S ribosomal protein S12 methylthiotransferase RimO"/>
    <property type="match status" value="1"/>
</dbReference>
<dbReference type="NCBIfam" id="TIGR00089">
    <property type="entry name" value="MiaB/RimO family radical SAM methylthiotransferase"/>
    <property type="match status" value="1"/>
</dbReference>
<dbReference type="PANTHER" id="PTHR43837">
    <property type="entry name" value="RIBOSOMAL PROTEIN S12 METHYLTHIOTRANSFERASE RIMO"/>
    <property type="match status" value="1"/>
</dbReference>
<dbReference type="PANTHER" id="PTHR43837:SF1">
    <property type="entry name" value="RIBOSOMAL PROTEIN US12 METHYLTHIOTRANSFERASE RIMO"/>
    <property type="match status" value="1"/>
</dbReference>
<dbReference type="Pfam" id="PF04055">
    <property type="entry name" value="Radical_SAM"/>
    <property type="match status" value="1"/>
</dbReference>
<dbReference type="Pfam" id="PF18693">
    <property type="entry name" value="TRAM_2"/>
    <property type="match status" value="1"/>
</dbReference>
<dbReference type="Pfam" id="PF00919">
    <property type="entry name" value="UPF0004"/>
    <property type="match status" value="1"/>
</dbReference>
<dbReference type="SFLD" id="SFLDG01082">
    <property type="entry name" value="B12-binding_domain_containing"/>
    <property type="match status" value="1"/>
</dbReference>
<dbReference type="SFLD" id="SFLDG01061">
    <property type="entry name" value="methylthiotransferase"/>
    <property type="match status" value="1"/>
</dbReference>
<dbReference type="SFLD" id="SFLDF00274">
    <property type="entry name" value="ribosomal_protein_S12_methylth"/>
    <property type="match status" value="1"/>
</dbReference>
<dbReference type="SMART" id="SM00729">
    <property type="entry name" value="Elp3"/>
    <property type="match status" value="1"/>
</dbReference>
<dbReference type="SUPFAM" id="SSF102114">
    <property type="entry name" value="Radical SAM enzymes"/>
    <property type="match status" value="1"/>
</dbReference>
<dbReference type="PROSITE" id="PS51449">
    <property type="entry name" value="MTTASE_N"/>
    <property type="match status" value="1"/>
</dbReference>
<dbReference type="PROSITE" id="PS01278">
    <property type="entry name" value="MTTASE_RADICAL"/>
    <property type="match status" value="1"/>
</dbReference>
<dbReference type="PROSITE" id="PS51918">
    <property type="entry name" value="RADICAL_SAM"/>
    <property type="match status" value="1"/>
</dbReference>
<dbReference type="PROSITE" id="PS50926">
    <property type="entry name" value="TRAM"/>
    <property type="match status" value="1"/>
</dbReference>
<keyword id="KW-0004">4Fe-4S</keyword>
<keyword id="KW-0963">Cytoplasm</keyword>
<keyword id="KW-0408">Iron</keyword>
<keyword id="KW-0411">Iron-sulfur</keyword>
<keyword id="KW-0479">Metal-binding</keyword>
<keyword id="KW-1185">Reference proteome</keyword>
<keyword id="KW-0949">S-adenosyl-L-methionine</keyword>
<keyword id="KW-0808">Transferase</keyword>
<reference key="1">
    <citation type="submission" date="2008-06" db="EMBL/GenBank/DDBJ databases">
        <title>Complete sequence of Pelodictyon phaeoclathratiforme BU-1.</title>
        <authorList>
            <consortium name="US DOE Joint Genome Institute"/>
            <person name="Lucas S."/>
            <person name="Copeland A."/>
            <person name="Lapidus A."/>
            <person name="Glavina del Rio T."/>
            <person name="Dalin E."/>
            <person name="Tice H."/>
            <person name="Bruce D."/>
            <person name="Goodwin L."/>
            <person name="Pitluck S."/>
            <person name="Schmutz J."/>
            <person name="Larimer F."/>
            <person name="Land M."/>
            <person name="Hauser L."/>
            <person name="Kyrpides N."/>
            <person name="Mikhailova N."/>
            <person name="Liu Z."/>
            <person name="Li T."/>
            <person name="Zhao F."/>
            <person name="Overmann J."/>
            <person name="Bryant D.A."/>
            <person name="Richardson P."/>
        </authorList>
    </citation>
    <scope>NUCLEOTIDE SEQUENCE [LARGE SCALE GENOMIC DNA]</scope>
    <source>
        <strain>DSM 5477 / BU-1</strain>
    </source>
</reference>
<sequence>MTTHKLFLLSLGCSKNTVDSERLMAQAEASGIIFTETADEADTILINTCGFIEDAKEESITEILAAIDKKSEGTIQRLYVMGCLTELYRNELKEEMAEVDGFFGTRELPEILAALGAAYHEELYDHRSLLTPPHYTYLKIAEGCNRSCSFCSIPKIRGRYRSQPVEQLLREAILLKNSGVKELNIISQDISMFGYDTMGKSMLNDLVLRLSDMAFDWIRLLYAYPVNFPLEVIETMRERENICNYLDIPLQHCNDRILKSMNRGINKQESIQLIETVREKNPDIRLRTTMIAGYPGETREEFDELLEFVEANRFDRLGCFPYCHEEYAPSFALEDNVSAEEKQDRVAELMELQESVSQDKNRDFEGKEITVLIDQVEEGMAFGRTEYDAPEVDNECMLETGDFQVEPGMFCHARITDSTPFDLVGEVIGLV</sequence>
<feature type="chain" id="PRO_0000374916" description="Ribosomal protein uS12 methylthiotransferase RimO">
    <location>
        <begin position="1"/>
        <end position="431"/>
    </location>
</feature>
<feature type="domain" description="MTTase N-terminal" evidence="1">
    <location>
        <begin position="4"/>
        <end position="120"/>
    </location>
</feature>
<feature type="domain" description="Radical SAM core" evidence="2">
    <location>
        <begin position="130"/>
        <end position="359"/>
    </location>
</feature>
<feature type="domain" description="TRAM" evidence="1">
    <location>
        <begin position="362"/>
        <end position="429"/>
    </location>
</feature>
<feature type="binding site" evidence="1">
    <location>
        <position position="13"/>
    </location>
    <ligand>
        <name>[4Fe-4S] cluster</name>
        <dbReference type="ChEBI" id="CHEBI:49883"/>
        <label>1</label>
    </ligand>
</feature>
<feature type="binding site" evidence="1">
    <location>
        <position position="49"/>
    </location>
    <ligand>
        <name>[4Fe-4S] cluster</name>
        <dbReference type="ChEBI" id="CHEBI:49883"/>
        <label>1</label>
    </ligand>
</feature>
<feature type="binding site" evidence="1">
    <location>
        <position position="83"/>
    </location>
    <ligand>
        <name>[4Fe-4S] cluster</name>
        <dbReference type="ChEBI" id="CHEBI:49883"/>
        <label>1</label>
    </ligand>
</feature>
<feature type="binding site" evidence="1">
    <location>
        <position position="144"/>
    </location>
    <ligand>
        <name>[4Fe-4S] cluster</name>
        <dbReference type="ChEBI" id="CHEBI:49883"/>
        <label>2</label>
        <note>4Fe-4S-S-AdoMet</note>
    </ligand>
</feature>
<feature type="binding site" evidence="1">
    <location>
        <position position="148"/>
    </location>
    <ligand>
        <name>[4Fe-4S] cluster</name>
        <dbReference type="ChEBI" id="CHEBI:49883"/>
        <label>2</label>
        <note>4Fe-4S-S-AdoMet</note>
    </ligand>
</feature>
<feature type="binding site" evidence="1">
    <location>
        <position position="151"/>
    </location>
    <ligand>
        <name>[4Fe-4S] cluster</name>
        <dbReference type="ChEBI" id="CHEBI:49883"/>
        <label>2</label>
        <note>4Fe-4S-S-AdoMet</note>
    </ligand>
</feature>